<proteinExistence type="inferred from homology"/>
<comment type="catalytic activity">
    <reaction evidence="1">
        <text>5-amino-1-(5-phospho-D-ribosyl)imidazole-4-carboxylate + L-aspartate + ATP = (2S)-2-[5-amino-1-(5-phospho-beta-D-ribosyl)imidazole-4-carboxamido]succinate + ADP + phosphate + 2 H(+)</text>
        <dbReference type="Rhea" id="RHEA:22628"/>
        <dbReference type="ChEBI" id="CHEBI:15378"/>
        <dbReference type="ChEBI" id="CHEBI:29991"/>
        <dbReference type="ChEBI" id="CHEBI:30616"/>
        <dbReference type="ChEBI" id="CHEBI:43474"/>
        <dbReference type="ChEBI" id="CHEBI:58443"/>
        <dbReference type="ChEBI" id="CHEBI:77657"/>
        <dbReference type="ChEBI" id="CHEBI:456216"/>
        <dbReference type="EC" id="6.3.2.6"/>
    </reaction>
</comment>
<comment type="pathway">
    <text evidence="1">Purine metabolism; IMP biosynthesis via de novo pathway; 5-amino-1-(5-phospho-D-ribosyl)imidazole-4-carboxamide from 5-amino-1-(5-phospho-D-ribosyl)imidazole-4-carboxylate: step 1/2.</text>
</comment>
<comment type="similarity">
    <text evidence="1">Belongs to the SAICAR synthetase family.</text>
</comment>
<organism>
    <name type="scientific">Salmonella paratyphi C (strain RKS4594)</name>
    <dbReference type="NCBI Taxonomy" id="476213"/>
    <lineage>
        <taxon>Bacteria</taxon>
        <taxon>Pseudomonadati</taxon>
        <taxon>Pseudomonadota</taxon>
        <taxon>Gammaproteobacteria</taxon>
        <taxon>Enterobacterales</taxon>
        <taxon>Enterobacteriaceae</taxon>
        <taxon>Salmonella</taxon>
    </lineage>
</organism>
<gene>
    <name evidence="1" type="primary">purC</name>
    <name type="ordered locus">SPC_1172</name>
</gene>
<name>PUR7_SALPC</name>
<dbReference type="EC" id="6.3.2.6" evidence="1"/>
<dbReference type="EMBL" id="CP000857">
    <property type="protein sequence ID" value="ACN45338.1"/>
    <property type="molecule type" value="Genomic_DNA"/>
</dbReference>
<dbReference type="RefSeq" id="WP_001171630.1">
    <property type="nucleotide sequence ID" value="NC_012125.1"/>
</dbReference>
<dbReference type="SMR" id="C0PYS1"/>
<dbReference type="KEGG" id="sei:SPC_1172"/>
<dbReference type="HOGENOM" id="CLU_061495_2_1_6"/>
<dbReference type="UniPathway" id="UPA00074">
    <property type="reaction ID" value="UER00131"/>
</dbReference>
<dbReference type="Proteomes" id="UP000001599">
    <property type="component" value="Chromosome"/>
</dbReference>
<dbReference type="GO" id="GO:0005829">
    <property type="term" value="C:cytosol"/>
    <property type="evidence" value="ECO:0007669"/>
    <property type="project" value="TreeGrafter"/>
</dbReference>
<dbReference type="GO" id="GO:0005524">
    <property type="term" value="F:ATP binding"/>
    <property type="evidence" value="ECO:0007669"/>
    <property type="project" value="UniProtKB-KW"/>
</dbReference>
<dbReference type="GO" id="GO:0004639">
    <property type="term" value="F:phosphoribosylaminoimidazolesuccinocarboxamide synthase activity"/>
    <property type="evidence" value="ECO:0007669"/>
    <property type="project" value="UniProtKB-UniRule"/>
</dbReference>
<dbReference type="GO" id="GO:0006189">
    <property type="term" value="P:'de novo' IMP biosynthetic process"/>
    <property type="evidence" value="ECO:0007669"/>
    <property type="project" value="UniProtKB-UniRule"/>
</dbReference>
<dbReference type="GO" id="GO:0009236">
    <property type="term" value="P:cobalamin biosynthetic process"/>
    <property type="evidence" value="ECO:0007669"/>
    <property type="project" value="InterPro"/>
</dbReference>
<dbReference type="CDD" id="cd01415">
    <property type="entry name" value="SAICAR_synt_PurC"/>
    <property type="match status" value="1"/>
</dbReference>
<dbReference type="FunFam" id="3.30.200.20:FF:000086">
    <property type="entry name" value="Phosphoribosylaminoimidazole-succinocarboxamide synthase"/>
    <property type="match status" value="1"/>
</dbReference>
<dbReference type="FunFam" id="3.30.470.20:FF:000006">
    <property type="entry name" value="Phosphoribosylaminoimidazole-succinocarboxamide synthase"/>
    <property type="match status" value="1"/>
</dbReference>
<dbReference type="Gene3D" id="3.30.470.20">
    <property type="entry name" value="ATP-grasp fold, B domain"/>
    <property type="match status" value="1"/>
</dbReference>
<dbReference type="Gene3D" id="3.30.200.20">
    <property type="entry name" value="Phosphorylase Kinase, domain 1"/>
    <property type="match status" value="1"/>
</dbReference>
<dbReference type="HAMAP" id="MF_00137">
    <property type="entry name" value="SAICAR_synth"/>
    <property type="match status" value="1"/>
</dbReference>
<dbReference type="InterPro" id="IPR028923">
    <property type="entry name" value="SAICAR_synt/ADE2_N"/>
</dbReference>
<dbReference type="InterPro" id="IPR033934">
    <property type="entry name" value="SAICAR_synt_PurC"/>
</dbReference>
<dbReference type="InterPro" id="IPR001636">
    <property type="entry name" value="SAICAR_synth"/>
</dbReference>
<dbReference type="InterPro" id="IPR050089">
    <property type="entry name" value="SAICAR_synthetase"/>
</dbReference>
<dbReference type="InterPro" id="IPR018236">
    <property type="entry name" value="SAICAR_synthetase_CS"/>
</dbReference>
<dbReference type="NCBIfam" id="TIGR00081">
    <property type="entry name" value="purC"/>
    <property type="match status" value="1"/>
</dbReference>
<dbReference type="PANTHER" id="PTHR43599">
    <property type="entry name" value="MULTIFUNCTIONAL PROTEIN ADE2"/>
    <property type="match status" value="1"/>
</dbReference>
<dbReference type="PANTHER" id="PTHR43599:SF3">
    <property type="entry name" value="SI:DKEY-6E2.2"/>
    <property type="match status" value="1"/>
</dbReference>
<dbReference type="Pfam" id="PF01259">
    <property type="entry name" value="SAICAR_synt"/>
    <property type="match status" value="1"/>
</dbReference>
<dbReference type="SUPFAM" id="SSF56104">
    <property type="entry name" value="SAICAR synthase-like"/>
    <property type="match status" value="1"/>
</dbReference>
<dbReference type="PROSITE" id="PS01057">
    <property type="entry name" value="SAICAR_SYNTHETASE_1"/>
    <property type="match status" value="1"/>
</dbReference>
<dbReference type="PROSITE" id="PS01058">
    <property type="entry name" value="SAICAR_SYNTHETASE_2"/>
    <property type="match status" value="1"/>
</dbReference>
<evidence type="ECO:0000255" key="1">
    <source>
        <dbReference type="HAMAP-Rule" id="MF_00137"/>
    </source>
</evidence>
<keyword id="KW-0067">ATP-binding</keyword>
<keyword id="KW-0436">Ligase</keyword>
<keyword id="KW-0547">Nucleotide-binding</keyword>
<keyword id="KW-0658">Purine biosynthesis</keyword>
<feature type="chain" id="PRO_1000122927" description="Phosphoribosylaminoimidazole-succinocarboxamide synthase">
    <location>
        <begin position="1"/>
        <end position="237"/>
    </location>
</feature>
<sequence>MQKQAELYRGKAKTVYSTENPDLLVLEFRNDTSAGDGARIEQFDRKGMVNNKFNHFIMTKLAEAGIPTQMERLLSDTECLVKKLEMVPVECVVRNRAAGSLVKRLGVEEGMELNPPIFDLFLKNDALHDPMVNSSYCETFGWVSQENLARMKELTYKANDVLKKLFDDAGLILVDFKLEFGLYKGEVVLGDEFSPDGSRLWDKETLDKMDKDRFRQSLGGLIEAYEAVAHRLGVKLD</sequence>
<accession>C0PYS1</accession>
<protein>
    <recommendedName>
        <fullName evidence="1">Phosphoribosylaminoimidazole-succinocarboxamide synthase</fullName>
        <ecNumber evidence="1">6.3.2.6</ecNumber>
    </recommendedName>
    <alternativeName>
        <fullName evidence="1">SAICAR synthetase</fullName>
    </alternativeName>
</protein>
<reference key="1">
    <citation type="journal article" date="2009" name="PLoS ONE">
        <title>Salmonella paratyphi C: genetic divergence from Salmonella choleraesuis and pathogenic convergence with Salmonella typhi.</title>
        <authorList>
            <person name="Liu W.-Q."/>
            <person name="Feng Y."/>
            <person name="Wang Y."/>
            <person name="Zou Q.-H."/>
            <person name="Chen F."/>
            <person name="Guo J.-T."/>
            <person name="Peng Y.-H."/>
            <person name="Jin Y."/>
            <person name="Li Y.-G."/>
            <person name="Hu S.-N."/>
            <person name="Johnston R.N."/>
            <person name="Liu G.-R."/>
            <person name="Liu S.-L."/>
        </authorList>
    </citation>
    <scope>NUCLEOTIDE SEQUENCE [LARGE SCALE GENOMIC DNA]</scope>
    <source>
        <strain>RKS4594</strain>
    </source>
</reference>